<accession>O35216</accession>
<accession>Q545C9</accession>
<name>CENPA_MOUSE</name>
<proteinExistence type="evidence at transcript level"/>
<gene>
    <name type="primary">Cenpa</name>
</gene>
<reference key="1">
    <citation type="journal article" date="1998" name="Genomics">
        <title>Gene structure and sequence analysis of mouse centromere proteins A and C.</title>
        <authorList>
            <person name="Kalitsis P."/>
            <person name="Macdonald A.C."/>
            <person name="Newson A.J."/>
            <person name="Hudson D.F."/>
            <person name="Choo K.H.A."/>
        </authorList>
    </citation>
    <scope>NUCLEOTIDE SEQUENCE [GENOMIC DNA / MRNA]</scope>
    <source>
        <strain>129/Sv</strain>
        <strain>C57BL/6J</strain>
    </source>
</reference>
<reference key="2">
    <citation type="journal article" date="2005" name="Science">
        <title>The transcriptional landscape of the mammalian genome.</title>
        <authorList>
            <person name="Carninci P."/>
            <person name="Kasukawa T."/>
            <person name="Katayama S."/>
            <person name="Gough J."/>
            <person name="Frith M.C."/>
            <person name="Maeda N."/>
            <person name="Oyama R."/>
            <person name="Ravasi T."/>
            <person name="Lenhard B."/>
            <person name="Wells C."/>
            <person name="Kodzius R."/>
            <person name="Shimokawa K."/>
            <person name="Bajic V.B."/>
            <person name="Brenner S.E."/>
            <person name="Batalov S."/>
            <person name="Forrest A.R."/>
            <person name="Zavolan M."/>
            <person name="Davis M.J."/>
            <person name="Wilming L.G."/>
            <person name="Aidinis V."/>
            <person name="Allen J.E."/>
            <person name="Ambesi-Impiombato A."/>
            <person name="Apweiler R."/>
            <person name="Aturaliya R.N."/>
            <person name="Bailey T.L."/>
            <person name="Bansal M."/>
            <person name="Baxter L."/>
            <person name="Beisel K.W."/>
            <person name="Bersano T."/>
            <person name="Bono H."/>
            <person name="Chalk A.M."/>
            <person name="Chiu K.P."/>
            <person name="Choudhary V."/>
            <person name="Christoffels A."/>
            <person name="Clutterbuck D.R."/>
            <person name="Crowe M.L."/>
            <person name="Dalla E."/>
            <person name="Dalrymple B.P."/>
            <person name="de Bono B."/>
            <person name="Della Gatta G."/>
            <person name="di Bernardo D."/>
            <person name="Down T."/>
            <person name="Engstrom P."/>
            <person name="Fagiolini M."/>
            <person name="Faulkner G."/>
            <person name="Fletcher C.F."/>
            <person name="Fukushima T."/>
            <person name="Furuno M."/>
            <person name="Futaki S."/>
            <person name="Gariboldi M."/>
            <person name="Georgii-Hemming P."/>
            <person name="Gingeras T.R."/>
            <person name="Gojobori T."/>
            <person name="Green R.E."/>
            <person name="Gustincich S."/>
            <person name="Harbers M."/>
            <person name="Hayashi Y."/>
            <person name="Hensch T.K."/>
            <person name="Hirokawa N."/>
            <person name="Hill D."/>
            <person name="Huminiecki L."/>
            <person name="Iacono M."/>
            <person name="Ikeo K."/>
            <person name="Iwama A."/>
            <person name="Ishikawa T."/>
            <person name="Jakt M."/>
            <person name="Kanapin A."/>
            <person name="Katoh M."/>
            <person name="Kawasawa Y."/>
            <person name="Kelso J."/>
            <person name="Kitamura H."/>
            <person name="Kitano H."/>
            <person name="Kollias G."/>
            <person name="Krishnan S.P."/>
            <person name="Kruger A."/>
            <person name="Kummerfeld S.K."/>
            <person name="Kurochkin I.V."/>
            <person name="Lareau L.F."/>
            <person name="Lazarevic D."/>
            <person name="Lipovich L."/>
            <person name="Liu J."/>
            <person name="Liuni S."/>
            <person name="McWilliam S."/>
            <person name="Madan Babu M."/>
            <person name="Madera M."/>
            <person name="Marchionni L."/>
            <person name="Matsuda H."/>
            <person name="Matsuzawa S."/>
            <person name="Miki H."/>
            <person name="Mignone F."/>
            <person name="Miyake S."/>
            <person name="Morris K."/>
            <person name="Mottagui-Tabar S."/>
            <person name="Mulder N."/>
            <person name="Nakano N."/>
            <person name="Nakauchi H."/>
            <person name="Ng P."/>
            <person name="Nilsson R."/>
            <person name="Nishiguchi S."/>
            <person name="Nishikawa S."/>
            <person name="Nori F."/>
            <person name="Ohara O."/>
            <person name="Okazaki Y."/>
            <person name="Orlando V."/>
            <person name="Pang K.C."/>
            <person name="Pavan W.J."/>
            <person name="Pavesi G."/>
            <person name="Pesole G."/>
            <person name="Petrovsky N."/>
            <person name="Piazza S."/>
            <person name="Reed J."/>
            <person name="Reid J.F."/>
            <person name="Ring B.Z."/>
            <person name="Ringwald M."/>
            <person name="Rost B."/>
            <person name="Ruan Y."/>
            <person name="Salzberg S.L."/>
            <person name="Sandelin A."/>
            <person name="Schneider C."/>
            <person name="Schoenbach C."/>
            <person name="Sekiguchi K."/>
            <person name="Semple C.A."/>
            <person name="Seno S."/>
            <person name="Sessa L."/>
            <person name="Sheng Y."/>
            <person name="Shibata Y."/>
            <person name="Shimada H."/>
            <person name="Shimada K."/>
            <person name="Silva D."/>
            <person name="Sinclair B."/>
            <person name="Sperling S."/>
            <person name="Stupka E."/>
            <person name="Sugiura K."/>
            <person name="Sultana R."/>
            <person name="Takenaka Y."/>
            <person name="Taki K."/>
            <person name="Tammoja K."/>
            <person name="Tan S.L."/>
            <person name="Tang S."/>
            <person name="Taylor M.S."/>
            <person name="Tegner J."/>
            <person name="Teichmann S.A."/>
            <person name="Ueda H.R."/>
            <person name="van Nimwegen E."/>
            <person name="Verardo R."/>
            <person name="Wei C.L."/>
            <person name="Yagi K."/>
            <person name="Yamanishi H."/>
            <person name="Zabarovsky E."/>
            <person name="Zhu S."/>
            <person name="Zimmer A."/>
            <person name="Hide W."/>
            <person name="Bult C."/>
            <person name="Grimmond S.M."/>
            <person name="Teasdale R.D."/>
            <person name="Liu E.T."/>
            <person name="Brusic V."/>
            <person name="Quackenbush J."/>
            <person name="Wahlestedt C."/>
            <person name="Mattick J.S."/>
            <person name="Hume D.A."/>
            <person name="Kai C."/>
            <person name="Sasaki D."/>
            <person name="Tomaru Y."/>
            <person name="Fukuda S."/>
            <person name="Kanamori-Katayama M."/>
            <person name="Suzuki M."/>
            <person name="Aoki J."/>
            <person name="Arakawa T."/>
            <person name="Iida J."/>
            <person name="Imamura K."/>
            <person name="Itoh M."/>
            <person name="Kato T."/>
            <person name="Kawaji H."/>
            <person name="Kawagashira N."/>
            <person name="Kawashima T."/>
            <person name="Kojima M."/>
            <person name="Kondo S."/>
            <person name="Konno H."/>
            <person name="Nakano K."/>
            <person name="Ninomiya N."/>
            <person name="Nishio T."/>
            <person name="Okada M."/>
            <person name="Plessy C."/>
            <person name="Shibata K."/>
            <person name="Shiraki T."/>
            <person name="Suzuki S."/>
            <person name="Tagami M."/>
            <person name="Waki K."/>
            <person name="Watahiki A."/>
            <person name="Okamura-Oho Y."/>
            <person name="Suzuki H."/>
            <person name="Kawai J."/>
            <person name="Hayashizaki Y."/>
        </authorList>
    </citation>
    <scope>NUCLEOTIDE SEQUENCE [LARGE SCALE MRNA]</scope>
    <source>
        <strain>C57BL/6J</strain>
        <strain>NOD</strain>
        <tissue>Eye</tissue>
        <tissue>Thymus</tissue>
    </source>
</reference>
<reference key="3">
    <citation type="journal article" date="2004" name="Genome Res.">
        <title>The status, quality, and expansion of the NIH full-length cDNA project: the Mammalian Gene Collection (MGC).</title>
        <authorList>
            <consortium name="The MGC Project Team"/>
        </authorList>
    </citation>
    <scope>NUCLEOTIDE SEQUENCE [LARGE SCALE MRNA]</scope>
    <source>
        <strain>Czech II</strain>
        <tissue>Mammary gland</tissue>
    </source>
</reference>
<reference key="4">
    <citation type="journal article" date="2002" name="J. Biol. Chem.">
        <title>Centromere proteins Cenpa, Cenpb, and Bub3 interact with poly(ADP-ribose) polymerase-1 protein and are poly(ADP-ribosyl)ated.</title>
        <authorList>
            <person name="Saxena A."/>
            <person name="Saffery R."/>
            <person name="Wong L.H."/>
            <person name="Kalitsis P."/>
            <person name="Choo K.H."/>
        </authorList>
    </citation>
    <scope>POLY-ADP-RIBOSYLATION BY PARP1</scope>
</reference>
<reference key="5">
    <citation type="journal article" date="2016" name="Mol. Cell">
        <title>The flexible ends of CENP-A nucleosome are required for mitotic fidelity.</title>
        <authorList>
            <person name="Roulland Y."/>
            <person name="Ouararhni K."/>
            <person name="Naidenov M."/>
            <person name="Ramos L."/>
            <person name="Shuaib M."/>
            <person name="Syed S.H."/>
            <person name="Lone I.N."/>
            <person name="Boopathi R."/>
            <person name="Fontaine E."/>
            <person name="Papai G."/>
            <person name="Tachiwana H."/>
            <person name="Gautier T."/>
            <person name="Skoufias D."/>
            <person name="Padmanabhan K."/>
            <person name="Bednar J."/>
            <person name="Kurumizaka H."/>
            <person name="Schultz P."/>
            <person name="Angelov D."/>
            <person name="Hamiche A."/>
            <person name="Dimitrov S."/>
        </authorList>
    </citation>
    <scope>FUNCTION</scope>
</reference>
<sequence length="134" mass="15509">MGPRRKPQTPRRRPSSPAPGPSRQSSSVGSQTLRRRQKFMWLKEIKTLQKSTDLLFRKKPFSMVVREICEKFSRGVDFWWQAQALLALQEAAEAFLIHLFEDAYLLSLHAGRVTLFPKDIQLTRRIRGFEGGLP</sequence>
<protein>
    <recommendedName>
        <fullName>Histone H3-like centromeric protein A</fullName>
    </recommendedName>
    <alternativeName>
        <fullName>Centromere protein A</fullName>
        <shortName>CENP-A</shortName>
    </alternativeName>
</protein>
<dbReference type="EMBL" id="AF012709">
    <property type="protein sequence ID" value="AAC39957.1"/>
    <property type="molecule type" value="mRNA"/>
</dbReference>
<dbReference type="EMBL" id="AF012710">
    <property type="protein sequence ID" value="AAC39958.1"/>
    <property type="molecule type" value="Genomic_DNA"/>
</dbReference>
<dbReference type="EMBL" id="AK010718">
    <property type="protein sequence ID" value="BAB27140.1"/>
    <property type="molecule type" value="mRNA"/>
</dbReference>
<dbReference type="EMBL" id="AK011399">
    <property type="protein sequence ID" value="BAB27591.1"/>
    <property type="molecule type" value="mRNA"/>
</dbReference>
<dbReference type="EMBL" id="AK053763">
    <property type="protein sequence ID" value="BAC35512.1"/>
    <property type="molecule type" value="mRNA"/>
</dbReference>
<dbReference type="EMBL" id="AK089033">
    <property type="protein sequence ID" value="BAC40710.1"/>
    <property type="molecule type" value="mRNA"/>
</dbReference>
<dbReference type="EMBL" id="BC011038">
    <property type="protein sequence ID" value="AAH11038.1"/>
    <property type="molecule type" value="mRNA"/>
</dbReference>
<dbReference type="CCDS" id="CCDS19162.1"/>
<dbReference type="RefSeq" id="NP_001289058.1">
    <property type="nucleotide sequence ID" value="NM_001302129.1"/>
</dbReference>
<dbReference type="RefSeq" id="NP_001289059.1">
    <property type="nucleotide sequence ID" value="NM_001302130.1"/>
</dbReference>
<dbReference type="RefSeq" id="NP_001289060.1">
    <property type="nucleotide sequence ID" value="NM_001302131.1"/>
</dbReference>
<dbReference type="RefSeq" id="NP_001289061.1">
    <property type="nucleotide sequence ID" value="NM_001302132.1"/>
</dbReference>
<dbReference type="RefSeq" id="NP_031707.1">
    <property type="nucleotide sequence ID" value="NM_007681.3"/>
</dbReference>
<dbReference type="SMR" id="O35216"/>
<dbReference type="BioGRID" id="198674">
    <property type="interactions" value="1"/>
</dbReference>
<dbReference type="ComplexPortal" id="CPX-5705">
    <property type="entry name" value="CENP-A nucleosome complex"/>
</dbReference>
<dbReference type="FunCoup" id="O35216">
    <property type="interactions" value="538"/>
</dbReference>
<dbReference type="IntAct" id="O35216">
    <property type="interactions" value="2"/>
</dbReference>
<dbReference type="MINT" id="O35216"/>
<dbReference type="STRING" id="10090.ENSMUSP00000122831"/>
<dbReference type="iPTMnet" id="O35216"/>
<dbReference type="PhosphoSitePlus" id="O35216"/>
<dbReference type="jPOST" id="O35216"/>
<dbReference type="PaxDb" id="10090-ENSMUSP00000122831"/>
<dbReference type="PeptideAtlas" id="O35216"/>
<dbReference type="ProteomicsDB" id="281535"/>
<dbReference type="Pumba" id="O35216"/>
<dbReference type="Antibodypedia" id="3643">
    <property type="antibodies" value="530 antibodies from 36 providers"/>
</dbReference>
<dbReference type="DNASU" id="12615"/>
<dbReference type="Ensembl" id="ENSMUST00000144742.6">
    <property type="protein sequence ID" value="ENSMUSP00000122831.2"/>
    <property type="gene ID" value="ENSMUSG00000029177.10"/>
</dbReference>
<dbReference type="GeneID" id="12615"/>
<dbReference type="KEGG" id="mmu:12615"/>
<dbReference type="UCSC" id="uc008wvt.2">
    <property type="organism name" value="mouse"/>
</dbReference>
<dbReference type="AGR" id="MGI:88375"/>
<dbReference type="CTD" id="1058"/>
<dbReference type="MGI" id="MGI:88375">
    <property type="gene designation" value="Cenpa"/>
</dbReference>
<dbReference type="VEuPathDB" id="HostDB:ENSMUSG00000029177"/>
<dbReference type="eggNOG" id="KOG1745">
    <property type="taxonomic scope" value="Eukaryota"/>
</dbReference>
<dbReference type="GeneTree" id="ENSGT01130000278322"/>
<dbReference type="HOGENOM" id="CLU_078295_3_2_1"/>
<dbReference type="InParanoid" id="O35216"/>
<dbReference type="OMA" id="REICITF"/>
<dbReference type="OrthoDB" id="842664at2759"/>
<dbReference type="PhylomeDB" id="O35216"/>
<dbReference type="TreeFam" id="TF354293"/>
<dbReference type="Reactome" id="R-MMU-141444">
    <property type="pathway name" value="Amplification of signal from unattached kinetochores via a MAD2 inhibitory signal"/>
</dbReference>
<dbReference type="Reactome" id="R-MMU-2467813">
    <property type="pathway name" value="Separation of Sister Chromatids"/>
</dbReference>
<dbReference type="Reactome" id="R-MMU-2500257">
    <property type="pathway name" value="Resolution of Sister Chromatid Cohesion"/>
</dbReference>
<dbReference type="Reactome" id="R-MMU-5663220">
    <property type="pathway name" value="RHO GTPases Activate Formins"/>
</dbReference>
<dbReference type="Reactome" id="R-MMU-606279">
    <property type="pathway name" value="Deposition of new CENPA-containing nucleosomes at the centromere"/>
</dbReference>
<dbReference type="Reactome" id="R-MMU-68877">
    <property type="pathway name" value="Mitotic Prometaphase"/>
</dbReference>
<dbReference type="Reactome" id="R-MMU-9648025">
    <property type="pathway name" value="EML4 and NUDC in mitotic spindle formation"/>
</dbReference>
<dbReference type="BioGRID-ORCS" id="12615">
    <property type="hits" value="26 hits in 84 CRISPR screens"/>
</dbReference>
<dbReference type="ChiTaRS" id="Cenpa">
    <property type="organism name" value="mouse"/>
</dbReference>
<dbReference type="PRO" id="PR:O35216"/>
<dbReference type="Proteomes" id="UP000000589">
    <property type="component" value="Chromosome 5"/>
</dbReference>
<dbReference type="RNAct" id="O35216">
    <property type="molecule type" value="protein"/>
</dbReference>
<dbReference type="Bgee" id="ENSMUSG00000029177">
    <property type="expression patterns" value="Expressed in urogenital fold and 194 other cell types or tissues"/>
</dbReference>
<dbReference type="ExpressionAtlas" id="O35216">
    <property type="expression patterns" value="baseline and differential"/>
</dbReference>
<dbReference type="GO" id="GO:0061638">
    <property type="term" value="C:CENP-A containing chromatin"/>
    <property type="evidence" value="ECO:0000314"/>
    <property type="project" value="MGI"/>
</dbReference>
<dbReference type="GO" id="GO:0043505">
    <property type="term" value="C:CENP-A containing nucleosome"/>
    <property type="evidence" value="ECO:0000266"/>
    <property type="project" value="ComplexPortal"/>
</dbReference>
<dbReference type="GO" id="GO:0000775">
    <property type="term" value="C:chromosome, centromeric region"/>
    <property type="evidence" value="ECO:0000314"/>
    <property type="project" value="MGI"/>
</dbReference>
<dbReference type="GO" id="GO:0000779">
    <property type="term" value="C:condensed chromosome, centromeric region"/>
    <property type="evidence" value="ECO:0000314"/>
    <property type="project" value="MGI"/>
</dbReference>
<dbReference type="GO" id="GO:0005654">
    <property type="term" value="C:nucleoplasm"/>
    <property type="evidence" value="ECO:0007669"/>
    <property type="project" value="Ensembl"/>
</dbReference>
<dbReference type="GO" id="GO:0005721">
    <property type="term" value="C:pericentric heterochromatin"/>
    <property type="evidence" value="ECO:0000314"/>
    <property type="project" value="MGI"/>
</dbReference>
<dbReference type="GO" id="GO:0003677">
    <property type="term" value="F:DNA binding"/>
    <property type="evidence" value="ECO:0007669"/>
    <property type="project" value="UniProtKB-KW"/>
</dbReference>
<dbReference type="GO" id="GO:0046982">
    <property type="term" value="F:protein heterodimerization activity"/>
    <property type="evidence" value="ECO:0007669"/>
    <property type="project" value="InterPro"/>
</dbReference>
<dbReference type="GO" id="GO:0030527">
    <property type="term" value="F:structural constituent of chromatin"/>
    <property type="evidence" value="ECO:0007669"/>
    <property type="project" value="InterPro"/>
</dbReference>
<dbReference type="GO" id="GO:0034080">
    <property type="term" value="P:CENP-A containing chromatin assembly"/>
    <property type="evidence" value="ECO:0007669"/>
    <property type="project" value="Ensembl"/>
</dbReference>
<dbReference type="GO" id="GO:0000132">
    <property type="term" value="P:establishment of mitotic spindle orientation"/>
    <property type="evidence" value="ECO:0007669"/>
    <property type="project" value="Ensembl"/>
</dbReference>
<dbReference type="GO" id="GO:0051382">
    <property type="term" value="P:kinetochore assembly"/>
    <property type="evidence" value="ECO:0007669"/>
    <property type="project" value="Ensembl"/>
</dbReference>
<dbReference type="GO" id="GO:0000281">
    <property type="term" value="P:mitotic cytokinesis"/>
    <property type="evidence" value="ECO:0007669"/>
    <property type="project" value="Ensembl"/>
</dbReference>
<dbReference type="GO" id="GO:0061644">
    <property type="term" value="P:protein localization to CENP-A containing chromatin"/>
    <property type="evidence" value="ECO:0000303"/>
    <property type="project" value="ComplexPortal"/>
</dbReference>
<dbReference type="GO" id="GO:0071459">
    <property type="term" value="P:protein localization to chromosome, centromeric region"/>
    <property type="evidence" value="ECO:0000315"/>
    <property type="project" value="MGI"/>
</dbReference>
<dbReference type="CDD" id="cd22911">
    <property type="entry name" value="HFD_H3"/>
    <property type="match status" value="1"/>
</dbReference>
<dbReference type="FunFam" id="1.10.20.10:FF:000065">
    <property type="entry name" value="Histone H3-like centromeric protein A"/>
    <property type="match status" value="1"/>
</dbReference>
<dbReference type="Gene3D" id="1.10.20.10">
    <property type="entry name" value="Histone, subunit A"/>
    <property type="match status" value="1"/>
</dbReference>
<dbReference type="InterPro" id="IPR009072">
    <property type="entry name" value="Histone-fold"/>
</dbReference>
<dbReference type="InterPro" id="IPR007125">
    <property type="entry name" value="Histone_H2A/H2B/H3"/>
</dbReference>
<dbReference type="InterPro" id="IPR000164">
    <property type="entry name" value="Histone_H3/CENP-A"/>
</dbReference>
<dbReference type="PANTHER" id="PTHR45810:SF14">
    <property type="entry name" value="CENTROMERE PROTEIN A"/>
    <property type="match status" value="1"/>
</dbReference>
<dbReference type="PANTHER" id="PTHR45810">
    <property type="entry name" value="HISTONE H3.2"/>
    <property type="match status" value="1"/>
</dbReference>
<dbReference type="Pfam" id="PF00125">
    <property type="entry name" value="Histone"/>
    <property type="match status" value="1"/>
</dbReference>
<dbReference type="PRINTS" id="PR00622">
    <property type="entry name" value="HISTONEH3"/>
</dbReference>
<dbReference type="SMART" id="SM00428">
    <property type="entry name" value="H3"/>
    <property type="match status" value="1"/>
</dbReference>
<dbReference type="SUPFAM" id="SSF47113">
    <property type="entry name" value="Histone-fold"/>
    <property type="match status" value="1"/>
</dbReference>
<feature type="initiator methionine" description="Removed" evidence="1">
    <location>
        <position position="1"/>
    </location>
</feature>
<feature type="chain" id="PRO_0000221374" description="Histone H3-like centromeric protein A">
    <location>
        <begin position="2"/>
        <end position="134"/>
    </location>
</feature>
<feature type="region of interest" description="Disordered" evidence="2">
    <location>
        <begin position="1"/>
        <end position="34"/>
    </location>
</feature>
<feature type="region of interest" description="Important for flexibility of DNA ends that protrude from nucleosomes" evidence="1">
    <location>
        <begin position="34"/>
        <end position="48"/>
    </location>
</feature>
<feature type="region of interest" description="H3-like">
    <location>
        <begin position="35"/>
        <end position="134"/>
    </location>
</feature>
<feature type="region of interest" description="CATD">
    <location>
        <begin position="69"/>
        <end position="110"/>
    </location>
</feature>
<feature type="compositionally biased region" description="Basic residues" evidence="2">
    <location>
        <begin position="1"/>
        <end position="14"/>
    </location>
</feature>
<feature type="modified residue" description="N,N,N-trimethylglycine" evidence="1">
    <location>
        <position position="2"/>
    </location>
</feature>
<feature type="modified residue" description="Phosphoserine" evidence="1">
    <location>
        <position position="16"/>
    </location>
</feature>
<feature type="modified residue" description="Phosphoserine" evidence="1">
    <location>
        <position position="22"/>
    </location>
</feature>
<feature type="modified residue" description="Phosphoserine" evidence="1">
    <location>
        <position position="62"/>
    </location>
</feature>
<comment type="function">
    <text evidence="1 3">Histone H3-like nucleosomal protein that is specifically found in centromeric nucleosomes. Replaces conventional H3 in the nucleosome core of centromeric chromatin that serves as an assembly site for the inner kinetochore. The presence of CENPA subtly modifies the nucleosome structure and the way DNA is wrapped around the nucleosome and gives rise to protruding DNA ends that are less well-ordered and rigid compared to nucleosomes containing histone H3. May serve as an epigenetic mark that propagates centromere identity through replication and cell division (By similarity). Required for recruitment and assembly of kinetochore proteins, and as a consequence required for progress through mitosis, chromosome segregation and cytokinesis (PubMed:27499292).</text>
</comment>
<comment type="subunit">
    <text evidence="1">Component of centromeric nucleosomes, where DNA is wrapped around a histone octamer core. The octamer contains two molecules each of H2A, H2B, CENPA and H4 assembled in one CENPA-H4 heterotetramer and two H2A-H2B heterodimers. CENPA modulates the DNA-binding characteristics of nucleosomes so that protruding DNA ends have higher flexibility than in nucleosomes containing conventional histone H3. Inhibits binding of histone H1 to nucleosomes, since histone H1 binds preferentially to rigid DNA linkers that protrude from nucleosomes. Nucleosomes containing CENPA also contain histone H2A variants such as MACROH2A and H2A.Z/H2AZ1. The CENPA-H4 heterotetramer is more compact and structurally more rigid than corresponding H3-H4 heterotetramers. Can assemble into nucleosomes that contain both CENPA and histone H3.3; these nucleosomes interact with a single CENPC chain. Heterotrimer composed of HJURP, CENPA and histone H4, where HJURP interacts with the dimer formed by CENPA and histone H4 and prevents tetramerization of CENPA and H4. Component of the CENPA-NAC complex, at least composed of CENPA, CENPC, CENPH, CENPM, CENPN, CENPT and CENPU. Interacts (via CATD domain) with HJURP; the interaction is direct and is required for its localization to centromeres. Interacts with CENPC, CENPN and CENPT; interaction is direct. Part of a centromere complex consisting of CENPA, CENPT and CENPW. Identified in centromere complexes containing histones H2A, H2B and H4, and at least CENPA, CENPB, CENPC, CENPT, CENPN, HJURP, SUPT16H, SSRP1 and RSF1. Can self-associate. The CENPA-H4 heterotetramer can bind DNA by itself (in vitro). Interacts with CDK1, PPP1CA and RBBP7.</text>
</comment>
<comment type="subcellular location">
    <subcellularLocation>
        <location evidence="1">Nucleus</location>
    </subcellularLocation>
    <subcellularLocation>
        <location evidence="1">Chromosome</location>
        <location evidence="1">Centromere</location>
    </subcellularLocation>
    <text evidence="1">Localizes exclusively to sites of kinetochore assembly in centromeres. Occupies a compact domain at the inner kinetochore plate stretching across 2 thirds of the length of the constriction but encompassing only one third of the constriction width and height. Phosphorylation at Ser-62 during early mitosis abolishes association with chromatin and centromeres and results in dispersed nuclear location.</text>
</comment>
<comment type="domain">
    <text evidence="1">The CATD (CENPA targeting domain) region is responsible for the more compact structure of nucleosomes containing CENPA. It is necessary and sufficient to mediate the localization into centromeres.</text>
</comment>
<comment type="PTM">
    <text>Poly-ADP-ribosylated by PARP1.</text>
</comment>
<comment type="PTM">
    <text evidence="1">Trimethylated by NTMT1 at the N-terminal glycine after cleavage of Met-1. Methylation is low before incorporation into nucleosomes and increases with cell cycle progression, with the highest levels in mitotic nucleosomes.</text>
</comment>
<comment type="PTM">
    <text evidence="1">Phosphorylated by CDK1 at Ser-62 during early mitosis; this abolishes association with chromatin and centromeres, prevents interaction with HJURP and thereby prevents premature assembly of CENPA into centromeres. Dephosphorylated at Ser-62 by PPP1CA during late mitosis.</text>
</comment>
<comment type="similarity">
    <text evidence="4">Belongs to the histone H3 family.</text>
</comment>
<keyword id="KW-0013">ADP-ribosylation</keyword>
<keyword id="KW-0137">Centromere</keyword>
<keyword id="KW-0158">Chromosome</keyword>
<keyword id="KW-0238">DNA-binding</keyword>
<keyword id="KW-0488">Methylation</keyword>
<keyword id="KW-0544">Nucleosome core</keyword>
<keyword id="KW-0539">Nucleus</keyword>
<keyword id="KW-0597">Phosphoprotein</keyword>
<keyword id="KW-1185">Reference proteome</keyword>
<evidence type="ECO:0000250" key="1">
    <source>
        <dbReference type="UniProtKB" id="P49450"/>
    </source>
</evidence>
<evidence type="ECO:0000256" key="2">
    <source>
        <dbReference type="SAM" id="MobiDB-lite"/>
    </source>
</evidence>
<evidence type="ECO:0000269" key="3">
    <source>
    </source>
</evidence>
<evidence type="ECO:0000305" key="4"/>
<organism>
    <name type="scientific">Mus musculus</name>
    <name type="common">Mouse</name>
    <dbReference type="NCBI Taxonomy" id="10090"/>
    <lineage>
        <taxon>Eukaryota</taxon>
        <taxon>Metazoa</taxon>
        <taxon>Chordata</taxon>
        <taxon>Craniata</taxon>
        <taxon>Vertebrata</taxon>
        <taxon>Euteleostomi</taxon>
        <taxon>Mammalia</taxon>
        <taxon>Eutheria</taxon>
        <taxon>Euarchontoglires</taxon>
        <taxon>Glires</taxon>
        <taxon>Rodentia</taxon>
        <taxon>Myomorpha</taxon>
        <taxon>Muroidea</taxon>
        <taxon>Muridae</taxon>
        <taxon>Murinae</taxon>
        <taxon>Mus</taxon>
        <taxon>Mus</taxon>
    </lineage>
</organism>